<keyword id="KW-1185">Reference proteome</keyword>
<keyword id="KW-0687">Ribonucleoprotein</keyword>
<keyword id="KW-0689">Ribosomal protein</keyword>
<comment type="similarity">
    <text evidence="3">Belongs to the bacterial ribosomal protein bL32 family.</text>
</comment>
<sequence>MAVPARRTSKAKKNKRRTHKGLTTPGLSRDSETGEYRMSHRISPDGTYKGRTIIEK</sequence>
<organism>
    <name type="scientific">Listeria monocytogenes serovar 1/2a (strain ATCC BAA-679 / EGD-e)</name>
    <dbReference type="NCBI Taxonomy" id="169963"/>
    <lineage>
        <taxon>Bacteria</taxon>
        <taxon>Bacillati</taxon>
        <taxon>Bacillota</taxon>
        <taxon>Bacilli</taxon>
        <taxon>Bacillales</taxon>
        <taxon>Listeriaceae</taxon>
        <taxon>Listeria</taxon>
    </lineage>
</organism>
<evidence type="ECO:0000255" key="1">
    <source>
        <dbReference type="HAMAP-Rule" id="MF_00340"/>
    </source>
</evidence>
<evidence type="ECO:0000256" key="2">
    <source>
        <dbReference type="SAM" id="MobiDB-lite"/>
    </source>
</evidence>
<evidence type="ECO:0000305" key="3"/>
<accession>Q8Y9N9</accession>
<reference key="1">
    <citation type="journal article" date="2001" name="Science">
        <title>Comparative genomics of Listeria species.</title>
        <authorList>
            <person name="Glaser P."/>
            <person name="Frangeul L."/>
            <person name="Buchrieser C."/>
            <person name="Rusniok C."/>
            <person name="Amend A."/>
            <person name="Baquero F."/>
            <person name="Berche P."/>
            <person name="Bloecker H."/>
            <person name="Brandt P."/>
            <person name="Chakraborty T."/>
            <person name="Charbit A."/>
            <person name="Chetouani F."/>
            <person name="Couve E."/>
            <person name="de Daruvar A."/>
            <person name="Dehoux P."/>
            <person name="Domann E."/>
            <person name="Dominguez-Bernal G."/>
            <person name="Duchaud E."/>
            <person name="Durant L."/>
            <person name="Dussurget O."/>
            <person name="Entian K.-D."/>
            <person name="Fsihi H."/>
            <person name="Garcia-del Portillo F."/>
            <person name="Garrido P."/>
            <person name="Gautier L."/>
            <person name="Goebel W."/>
            <person name="Gomez-Lopez N."/>
            <person name="Hain T."/>
            <person name="Hauf J."/>
            <person name="Jackson D."/>
            <person name="Jones L.-M."/>
            <person name="Kaerst U."/>
            <person name="Kreft J."/>
            <person name="Kuhn M."/>
            <person name="Kunst F."/>
            <person name="Kurapkat G."/>
            <person name="Madueno E."/>
            <person name="Maitournam A."/>
            <person name="Mata Vicente J."/>
            <person name="Ng E."/>
            <person name="Nedjari H."/>
            <person name="Nordsiek G."/>
            <person name="Novella S."/>
            <person name="de Pablos B."/>
            <person name="Perez-Diaz J.-C."/>
            <person name="Purcell R."/>
            <person name="Remmel B."/>
            <person name="Rose M."/>
            <person name="Schlueter T."/>
            <person name="Simoes N."/>
            <person name="Tierrez A."/>
            <person name="Vazquez-Boland J.-A."/>
            <person name="Voss H."/>
            <person name="Wehland J."/>
            <person name="Cossart P."/>
        </authorList>
    </citation>
    <scope>NUCLEOTIDE SEQUENCE [LARGE SCALE GENOMIC DNA]</scope>
    <source>
        <strain>ATCC BAA-679 / EGD-e</strain>
    </source>
</reference>
<protein>
    <recommendedName>
        <fullName evidence="1">Large ribosomal subunit protein bL32A</fullName>
    </recommendedName>
    <alternativeName>
        <fullName evidence="3">50S ribosomal protein L32 1</fullName>
    </alternativeName>
</protein>
<proteinExistence type="inferred from homology"/>
<dbReference type="EMBL" id="AL591975">
    <property type="protein sequence ID" value="CAC98565.1"/>
    <property type="molecule type" value="Genomic_DNA"/>
</dbReference>
<dbReference type="PIR" id="AG1135">
    <property type="entry name" value="AG1135"/>
</dbReference>
<dbReference type="SMR" id="Q8Y9N9"/>
<dbReference type="STRING" id="169963.gene:17593137"/>
<dbReference type="PaxDb" id="169963-lmo0486"/>
<dbReference type="EnsemblBacteria" id="CAC98565">
    <property type="protein sequence ID" value="CAC98565"/>
    <property type="gene ID" value="CAC98565"/>
</dbReference>
<dbReference type="KEGG" id="lmo:lmo0486"/>
<dbReference type="PATRIC" id="fig|169963.11.peg.505"/>
<dbReference type="eggNOG" id="COG0333">
    <property type="taxonomic scope" value="Bacteria"/>
</dbReference>
<dbReference type="HOGENOM" id="CLU_129084_1_3_9"/>
<dbReference type="OrthoDB" id="9812874at2"/>
<dbReference type="PhylomeDB" id="Q8Y9N9"/>
<dbReference type="BioCyc" id="LMON169963:LMO0486-MONOMER"/>
<dbReference type="Proteomes" id="UP000000817">
    <property type="component" value="Chromosome"/>
</dbReference>
<dbReference type="GO" id="GO:0022625">
    <property type="term" value="C:cytosolic large ribosomal subunit"/>
    <property type="evidence" value="ECO:0000318"/>
    <property type="project" value="GO_Central"/>
</dbReference>
<dbReference type="GO" id="GO:0003735">
    <property type="term" value="F:structural constituent of ribosome"/>
    <property type="evidence" value="ECO:0000318"/>
    <property type="project" value="GO_Central"/>
</dbReference>
<dbReference type="GO" id="GO:0006412">
    <property type="term" value="P:translation"/>
    <property type="evidence" value="ECO:0007669"/>
    <property type="project" value="UniProtKB-UniRule"/>
</dbReference>
<dbReference type="HAMAP" id="MF_00340">
    <property type="entry name" value="Ribosomal_bL32"/>
    <property type="match status" value="1"/>
</dbReference>
<dbReference type="InterPro" id="IPR002677">
    <property type="entry name" value="Ribosomal_bL32"/>
</dbReference>
<dbReference type="InterPro" id="IPR044957">
    <property type="entry name" value="Ribosomal_bL32_bact"/>
</dbReference>
<dbReference type="InterPro" id="IPR011332">
    <property type="entry name" value="Ribosomal_zn-bd"/>
</dbReference>
<dbReference type="NCBIfam" id="TIGR01031">
    <property type="entry name" value="rpmF_bact"/>
    <property type="match status" value="1"/>
</dbReference>
<dbReference type="PANTHER" id="PTHR35534">
    <property type="entry name" value="50S RIBOSOMAL PROTEIN L32"/>
    <property type="match status" value="1"/>
</dbReference>
<dbReference type="PANTHER" id="PTHR35534:SF1">
    <property type="entry name" value="LARGE RIBOSOMAL SUBUNIT PROTEIN BL32"/>
    <property type="match status" value="1"/>
</dbReference>
<dbReference type="Pfam" id="PF01783">
    <property type="entry name" value="Ribosomal_L32p"/>
    <property type="match status" value="1"/>
</dbReference>
<dbReference type="SUPFAM" id="SSF57829">
    <property type="entry name" value="Zn-binding ribosomal proteins"/>
    <property type="match status" value="1"/>
</dbReference>
<feature type="chain" id="PRO_0000172360" description="Large ribosomal subunit protein bL32A">
    <location>
        <begin position="1"/>
        <end position="56"/>
    </location>
</feature>
<feature type="region of interest" description="Disordered" evidence="2">
    <location>
        <begin position="1"/>
        <end position="56"/>
    </location>
</feature>
<feature type="compositionally biased region" description="Basic residues" evidence="2">
    <location>
        <begin position="7"/>
        <end position="20"/>
    </location>
</feature>
<feature type="compositionally biased region" description="Basic and acidic residues" evidence="2">
    <location>
        <begin position="29"/>
        <end position="38"/>
    </location>
</feature>
<name>RL321_LISMO</name>
<gene>
    <name type="primary">rpmF1</name>
    <name type="ordered locus">lmo0486</name>
</gene>